<keyword id="KW-0113">Calvin cycle</keyword>
<keyword id="KW-0120">Carbon dioxide fixation</keyword>
<keyword id="KW-0150">Chloroplast</keyword>
<keyword id="KW-1015">Disulfide bond</keyword>
<keyword id="KW-0456">Lyase</keyword>
<keyword id="KW-0460">Magnesium</keyword>
<keyword id="KW-0479">Metal-binding</keyword>
<keyword id="KW-0488">Methylation</keyword>
<keyword id="KW-0503">Monooxygenase</keyword>
<keyword id="KW-0560">Oxidoreductase</keyword>
<keyword id="KW-0601">Photorespiration</keyword>
<keyword id="KW-0602">Photosynthesis</keyword>
<keyword id="KW-0934">Plastid</keyword>
<organism>
    <name type="scientific">Lupinus albifrons</name>
    <name type="common">Silver lupine</name>
    <dbReference type="NCBI Taxonomy" id="49830"/>
    <lineage>
        <taxon>Eukaryota</taxon>
        <taxon>Viridiplantae</taxon>
        <taxon>Streptophyta</taxon>
        <taxon>Embryophyta</taxon>
        <taxon>Tracheophyta</taxon>
        <taxon>Spermatophyta</taxon>
        <taxon>Magnoliopsida</taxon>
        <taxon>eudicotyledons</taxon>
        <taxon>Gunneridae</taxon>
        <taxon>Pentapetalae</taxon>
        <taxon>rosids</taxon>
        <taxon>fabids</taxon>
        <taxon>Fabales</taxon>
        <taxon>Fabaceae</taxon>
        <taxon>Papilionoideae</taxon>
        <taxon>50 kb inversion clade</taxon>
        <taxon>genistoids sensu lato</taxon>
        <taxon>core genistoids</taxon>
        <taxon>Genisteae</taxon>
        <taxon>Lupinus</taxon>
    </lineage>
</organism>
<name>RBL_LUPAB</name>
<geneLocation type="chloroplast"/>
<sequence length="455" mass="50301">SVGFKAGVKDYKLTYYTPDYKTKDTDILAAFRVTPQPGVPPEEAGAAVAAESSTGTWTTVWTDGLTSLDRYKGRCYHIEPVAGEESQFIAYVAYPLDLFEEGSVTNMFTSIVGNVFGFKALRALRLEDLRIPNAYVKTFQGPPHGIQVERDKLNKYGRPLLGCTIKPKLGLSAKNYGRAVYECLRGGLDFTKDDENVNSQPFMRWRDRFLFCAEALYKAQAETGEIKGHYLNATAGTCEEMIKRAVFARELGVPIVMHDYLTGGFTANTTLAHYCRDNGLLLHIHRAMHAVIDRQKNHGMHFRVLAKALRLSGGDHIHSGTVVGKLEGEREITLGFVDLLRDDFVEKDRSRGIYFTQDWVSLPGVLPVASGGIHVWHMPALTEIFGDDSVLQFGGGTLGHPWGNAPGAVANRVALEACVQARNEGRDLASEGNQIIREASKWSPELAAACEVWKE</sequence>
<proteinExistence type="inferred from homology"/>
<feature type="chain" id="PRO_0000062506" description="Ribulose bisphosphate carboxylase large chain">
    <location>
        <begin position="1" status="less than"/>
        <end position="455" status="greater than"/>
    </location>
</feature>
<feature type="active site" description="Proton acceptor" evidence="1">
    <location>
        <position position="166"/>
    </location>
</feature>
<feature type="active site" description="Proton acceptor" evidence="1">
    <location>
        <position position="285"/>
    </location>
</feature>
<feature type="binding site" description="in homodimeric partner" evidence="1">
    <location>
        <position position="114"/>
    </location>
    <ligand>
        <name>substrate</name>
    </ligand>
</feature>
<feature type="binding site" evidence="1">
    <location>
        <position position="164"/>
    </location>
    <ligand>
        <name>substrate</name>
    </ligand>
</feature>
<feature type="binding site" evidence="1">
    <location>
        <position position="168"/>
    </location>
    <ligand>
        <name>substrate</name>
    </ligand>
</feature>
<feature type="binding site" description="via carbamate group" evidence="1">
    <location>
        <position position="192"/>
    </location>
    <ligand>
        <name>Mg(2+)</name>
        <dbReference type="ChEBI" id="CHEBI:18420"/>
    </ligand>
</feature>
<feature type="binding site" evidence="1">
    <location>
        <position position="194"/>
    </location>
    <ligand>
        <name>Mg(2+)</name>
        <dbReference type="ChEBI" id="CHEBI:18420"/>
    </ligand>
</feature>
<feature type="binding site" evidence="1">
    <location>
        <position position="195"/>
    </location>
    <ligand>
        <name>Mg(2+)</name>
        <dbReference type="ChEBI" id="CHEBI:18420"/>
    </ligand>
</feature>
<feature type="binding site" evidence="1">
    <location>
        <position position="286"/>
    </location>
    <ligand>
        <name>substrate</name>
    </ligand>
</feature>
<feature type="binding site" evidence="1">
    <location>
        <position position="318"/>
    </location>
    <ligand>
        <name>substrate</name>
    </ligand>
</feature>
<feature type="binding site" evidence="1">
    <location>
        <position position="370"/>
    </location>
    <ligand>
        <name>substrate</name>
    </ligand>
</feature>
<feature type="site" description="Transition state stabilizer" evidence="1">
    <location>
        <position position="325"/>
    </location>
</feature>
<feature type="modified residue" description="N6,N6,N6-trimethyllysine" evidence="1">
    <location>
        <position position="5"/>
    </location>
</feature>
<feature type="modified residue" description="N6-carboxylysine" evidence="1">
    <location>
        <position position="192"/>
    </location>
</feature>
<feature type="disulfide bond" description="Interchain; in linked form" evidence="1">
    <location>
        <position position="238"/>
    </location>
</feature>
<feature type="non-terminal residue">
    <location>
        <position position="1"/>
    </location>
</feature>
<feature type="non-terminal residue">
    <location>
        <position position="455"/>
    </location>
</feature>
<accession>P69573</accession>
<accession>P52781</accession>
<dbReference type="EC" id="4.1.1.39" evidence="1"/>
<dbReference type="EMBL" id="Z70053">
    <property type="protein sequence ID" value="CAA93912.1"/>
    <property type="molecule type" value="Genomic_DNA"/>
</dbReference>
<dbReference type="SMR" id="P69573"/>
<dbReference type="GO" id="GO:0009507">
    <property type="term" value="C:chloroplast"/>
    <property type="evidence" value="ECO:0007669"/>
    <property type="project" value="UniProtKB-SubCell"/>
</dbReference>
<dbReference type="GO" id="GO:0000287">
    <property type="term" value="F:magnesium ion binding"/>
    <property type="evidence" value="ECO:0007669"/>
    <property type="project" value="InterPro"/>
</dbReference>
<dbReference type="GO" id="GO:0004497">
    <property type="term" value="F:monooxygenase activity"/>
    <property type="evidence" value="ECO:0007669"/>
    <property type="project" value="UniProtKB-KW"/>
</dbReference>
<dbReference type="GO" id="GO:0016984">
    <property type="term" value="F:ribulose-bisphosphate carboxylase activity"/>
    <property type="evidence" value="ECO:0007669"/>
    <property type="project" value="UniProtKB-EC"/>
</dbReference>
<dbReference type="GO" id="GO:0009853">
    <property type="term" value="P:photorespiration"/>
    <property type="evidence" value="ECO:0007669"/>
    <property type="project" value="UniProtKB-KW"/>
</dbReference>
<dbReference type="GO" id="GO:0019253">
    <property type="term" value="P:reductive pentose-phosphate cycle"/>
    <property type="evidence" value="ECO:0007669"/>
    <property type="project" value="UniProtKB-KW"/>
</dbReference>
<dbReference type="CDD" id="cd08212">
    <property type="entry name" value="RuBisCO_large_I"/>
    <property type="match status" value="1"/>
</dbReference>
<dbReference type="FunFam" id="3.20.20.110:FF:000001">
    <property type="entry name" value="Ribulose bisphosphate carboxylase large chain"/>
    <property type="match status" value="1"/>
</dbReference>
<dbReference type="FunFam" id="3.30.70.150:FF:000001">
    <property type="entry name" value="Ribulose bisphosphate carboxylase large chain"/>
    <property type="match status" value="1"/>
</dbReference>
<dbReference type="Gene3D" id="3.20.20.110">
    <property type="entry name" value="Ribulose bisphosphate carboxylase, large subunit, C-terminal domain"/>
    <property type="match status" value="1"/>
</dbReference>
<dbReference type="Gene3D" id="3.30.70.150">
    <property type="entry name" value="RuBisCO large subunit, N-terminal domain"/>
    <property type="match status" value="1"/>
</dbReference>
<dbReference type="HAMAP" id="MF_01338">
    <property type="entry name" value="RuBisCO_L_type1"/>
    <property type="match status" value="1"/>
</dbReference>
<dbReference type="InterPro" id="IPR033966">
    <property type="entry name" value="RuBisCO"/>
</dbReference>
<dbReference type="InterPro" id="IPR020878">
    <property type="entry name" value="RuBisCo_large_chain_AS"/>
</dbReference>
<dbReference type="InterPro" id="IPR000685">
    <property type="entry name" value="RuBisCO_lsu_C"/>
</dbReference>
<dbReference type="InterPro" id="IPR036376">
    <property type="entry name" value="RuBisCO_lsu_C_sf"/>
</dbReference>
<dbReference type="InterPro" id="IPR017443">
    <property type="entry name" value="RuBisCO_lsu_fd_N"/>
</dbReference>
<dbReference type="InterPro" id="IPR036422">
    <property type="entry name" value="RuBisCO_lsu_N_sf"/>
</dbReference>
<dbReference type="InterPro" id="IPR020888">
    <property type="entry name" value="RuBisCO_lsuI"/>
</dbReference>
<dbReference type="NCBIfam" id="NF003252">
    <property type="entry name" value="PRK04208.1"/>
    <property type="match status" value="1"/>
</dbReference>
<dbReference type="PANTHER" id="PTHR42704">
    <property type="entry name" value="RIBULOSE BISPHOSPHATE CARBOXYLASE"/>
    <property type="match status" value="1"/>
</dbReference>
<dbReference type="PANTHER" id="PTHR42704:SF16">
    <property type="entry name" value="RIBULOSE BISPHOSPHATE CARBOXYLASE LARGE CHAIN"/>
    <property type="match status" value="1"/>
</dbReference>
<dbReference type="Pfam" id="PF00016">
    <property type="entry name" value="RuBisCO_large"/>
    <property type="match status" value="1"/>
</dbReference>
<dbReference type="Pfam" id="PF02788">
    <property type="entry name" value="RuBisCO_large_N"/>
    <property type="match status" value="1"/>
</dbReference>
<dbReference type="SFLD" id="SFLDG01052">
    <property type="entry name" value="RuBisCO"/>
    <property type="match status" value="1"/>
</dbReference>
<dbReference type="SFLD" id="SFLDS00014">
    <property type="entry name" value="RuBisCO"/>
    <property type="match status" value="1"/>
</dbReference>
<dbReference type="SFLD" id="SFLDG00301">
    <property type="entry name" value="RuBisCO-like_proteins"/>
    <property type="match status" value="1"/>
</dbReference>
<dbReference type="SUPFAM" id="SSF51649">
    <property type="entry name" value="RuBisCo, C-terminal domain"/>
    <property type="match status" value="1"/>
</dbReference>
<dbReference type="SUPFAM" id="SSF54966">
    <property type="entry name" value="RuBisCO, large subunit, small (N-terminal) domain"/>
    <property type="match status" value="1"/>
</dbReference>
<dbReference type="PROSITE" id="PS00157">
    <property type="entry name" value="RUBISCO_LARGE"/>
    <property type="match status" value="1"/>
</dbReference>
<reference key="1">
    <citation type="journal article" date="1995" name="Bot. Acta">
        <title>Molecular phylogeny of the Papilionoideae (family Leguminosae): rbcL sequences versus chemical taxonomy.</title>
        <authorList>
            <person name="Kaess E."/>
            <person name="Wink M."/>
        </authorList>
    </citation>
    <scope>NUCLEOTIDE SEQUENCE [GENOMIC DNA]</scope>
    <source>
        <tissue>Leaf</tissue>
    </source>
</reference>
<protein>
    <recommendedName>
        <fullName evidence="1">Ribulose bisphosphate carboxylase large chain</fullName>
        <shortName evidence="1">RuBisCO large subunit</shortName>
        <ecNumber evidence="1">4.1.1.39</ecNumber>
    </recommendedName>
</protein>
<evidence type="ECO:0000255" key="1">
    <source>
        <dbReference type="HAMAP-Rule" id="MF_01338"/>
    </source>
</evidence>
<gene>
    <name evidence="1" type="primary">rbcL</name>
</gene>
<comment type="function">
    <text evidence="1">RuBisCO catalyzes two reactions: the carboxylation of D-ribulose 1,5-bisphosphate, the primary event in carbon dioxide fixation, as well as the oxidative fragmentation of the pentose substrate in the photorespiration process. Both reactions occur simultaneously and in competition at the same active site.</text>
</comment>
<comment type="catalytic activity">
    <reaction evidence="1">
        <text>2 (2R)-3-phosphoglycerate + 2 H(+) = D-ribulose 1,5-bisphosphate + CO2 + H2O</text>
        <dbReference type="Rhea" id="RHEA:23124"/>
        <dbReference type="ChEBI" id="CHEBI:15377"/>
        <dbReference type="ChEBI" id="CHEBI:15378"/>
        <dbReference type="ChEBI" id="CHEBI:16526"/>
        <dbReference type="ChEBI" id="CHEBI:57870"/>
        <dbReference type="ChEBI" id="CHEBI:58272"/>
        <dbReference type="EC" id="4.1.1.39"/>
    </reaction>
</comment>
<comment type="catalytic activity">
    <reaction evidence="1">
        <text>D-ribulose 1,5-bisphosphate + O2 = 2-phosphoglycolate + (2R)-3-phosphoglycerate + 2 H(+)</text>
        <dbReference type="Rhea" id="RHEA:36631"/>
        <dbReference type="ChEBI" id="CHEBI:15378"/>
        <dbReference type="ChEBI" id="CHEBI:15379"/>
        <dbReference type="ChEBI" id="CHEBI:57870"/>
        <dbReference type="ChEBI" id="CHEBI:58033"/>
        <dbReference type="ChEBI" id="CHEBI:58272"/>
    </reaction>
</comment>
<comment type="cofactor">
    <cofactor evidence="1">
        <name>Mg(2+)</name>
        <dbReference type="ChEBI" id="CHEBI:18420"/>
    </cofactor>
    <text evidence="1">Binds 1 Mg(2+) ion per subunit.</text>
</comment>
<comment type="subunit">
    <text evidence="1">Heterohexadecamer of 8 large chains and 8 small chains; disulfide-linked. The disulfide link is formed within the large subunit homodimers.</text>
</comment>
<comment type="subcellular location">
    <subcellularLocation>
        <location>Plastid</location>
        <location>Chloroplast</location>
    </subcellularLocation>
</comment>
<comment type="PTM">
    <text evidence="1">The disulfide bond which can form in the large chain dimeric partners within the hexadecamer appears to be associated with oxidative stress and protein turnover.</text>
</comment>
<comment type="miscellaneous">
    <text evidence="1">The basic functional RuBisCO is composed of a large chain homodimer in a 'head-to-tail' conformation. In form I RuBisCO this homodimer is arranged in a barrel-like tetramer with the small subunits forming a tetrameric 'cap' on each end of the 'barrel'.</text>
</comment>
<comment type="similarity">
    <text evidence="1">Belongs to the RuBisCO large chain family. Type I subfamily.</text>
</comment>